<dbReference type="EMBL" id="AL590842">
    <property type="protein sequence ID" value="CAL22664.1"/>
    <property type="molecule type" value="Genomic_DNA"/>
</dbReference>
<dbReference type="EMBL" id="AE009952">
    <property type="protein sequence ID" value="AAM87653.1"/>
    <property type="status" value="ALT_INIT"/>
    <property type="molecule type" value="Genomic_DNA"/>
</dbReference>
<dbReference type="EMBL" id="AE017042">
    <property type="protein sequence ID" value="AAS64142.1"/>
    <property type="status" value="ALT_INIT"/>
    <property type="molecule type" value="Genomic_DNA"/>
</dbReference>
<dbReference type="PIR" id="AE0497">
    <property type="entry name" value="AE0497"/>
</dbReference>
<dbReference type="RefSeq" id="WP_002209643.1">
    <property type="nucleotide sequence ID" value="NZ_WUCM01000028.1"/>
</dbReference>
<dbReference type="RefSeq" id="YP_002348947.1">
    <property type="nucleotide sequence ID" value="NC_003143.1"/>
</dbReference>
<dbReference type="SMR" id="Q8Z9U9"/>
<dbReference type="IntAct" id="Q8Z9U9">
    <property type="interactions" value="1"/>
</dbReference>
<dbReference type="STRING" id="214092.YPO4095"/>
<dbReference type="PaxDb" id="214092-YPO4095"/>
<dbReference type="EnsemblBacteria" id="AAS64142">
    <property type="protein sequence ID" value="AAS64142"/>
    <property type="gene ID" value="YP_4003"/>
</dbReference>
<dbReference type="GeneID" id="57974627"/>
<dbReference type="KEGG" id="ype:YPO4095"/>
<dbReference type="KEGG" id="ypk:y4111"/>
<dbReference type="KEGG" id="ypm:YP_4003"/>
<dbReference type="PATRIC" id="fig|214092.21.peg.4636"/>
<dbReference type="eggNOG" id="COG1195">
    <property type="taxonomic scope" value="Bacteria"/>
</dbReference>
<dbReference type="HOGENOM" id="CLU_040267_0_0_6"/>
<dbReference type="OMA" id="GESWSYA"/>
<dbReference type="OrthoDB" id="9803889at2"/>
<dbReference type="Proteomes" id="UP000000815">
    <property type="component" value="Chromosome"/>
</dbReference>
<dbReference type="Proteomes" id="UP000001019">
    <property type="component" value="Chromosome"/>
</dbReference>
<dbReference type="Proteomes" id="UP000002490">
    <property type="component" value="Chromosome"/>
</dbReference>
<dbReference type="GO" id="GO:0005737">
    <property type="term" value="C:cytoplasm"/>
    <property type="evidence" value="ECO:0007669"/>
    <property type="project" value="UniProtKB-SubCell"/>
</dbReference>
<dbReference type="GO" id="GO:0005524">
    <property type="term" value="F:ATP binding"/>
    <property type="evidence" value="ECO:0007669"/>
    <property type="project" value="UniProtKB-UniRule"/>
</dbReference>
<dbReference type="GO" id="GO:0003697">
    <property type="term" value="F:single-stranded DNA binding"/>
    <property type="evidence" value="ECO:0007669"/>
    <property type="project" value="UniProtKB-UniRule"/>
</dbReference>
<dbReference type="GO" id="GO:0006260">
    <property type="term" value="P:DNA replication"/>
    <property type="evidence" value="ECO:0007669"/>
    <property type="project" value="UniProtKB-UniRule"/>
</dbReference>
<dbReference type="GO" id="GO:0000731">
    <property type="term" value="P:DNA synthesis involved in DNA repair"/>
    <property type="evidence" value="ECO:0000318"/>
    <property type="project" value="GO_Central"/>
</dbReference>
<dbReference type="GO" id="GO:0006302">
    <property type="term" value="P:double-strand break repair"/>
    <property type="evidence" value="ECO:0000318"/>
    <property type="project" value="GO_Central"/>
</dbReference>
<dbReference type="GO" id="GO:0009432">
    <property type="term" value="P:SOS response"/>
    <property type="evidence" value="ECO:0007669"/>
    <property type="project" value="UniProtKB-UniRule"/>
</dbReference>
<dbReference type="FunFam" id="1.20.1050.90:FF:000001">
    <property type="entry name" value="DNA replication and repair protein RecF"/>
    <property type="match status" value="1"/>
</dbReference>
<dbReference type="Gene3D" id="3.40.50.300">
    <property type="entry name" value="P-loop containing nucleotide triphosphate hydrolases"/>
    <property type="match status" value="1"/>
</dbReference>
<dbReference type="Gene3D" id="1.20.1050.90">
    <property type="entry name" value="RecF/RecN/SMC, N-terminal domain"/>
    <property type="match status" value="1"/>
</dbReference>
<dbReference type="HAMAP" id="MF_00365">
    <property type="entry name" value="RecF"/>
    <property type="match status" value="1"/>
</dbReference>
<dbReference type="InterPro" id="IPR001238">
    <property type="entry name" value="DNA-binding_RecF"/>
</dbReference>
<dbReference type="InterPro" id="IPR018078">
    <property type="entry name" value="DNA-binding_RecF_CS"/>
</dbReference>
<dbReference type="InterPro" id="IPR027417">
    <property type="entry name" value="P-loop_NTPase"/>
</dbReference>
<dbReference type="InterPro" id="IPR003395">
    <property type="entry name" value="RecF/RecN/SMC_N"/>
</dbReference>
<dbReference type="InterPro" id="IPR042174">
    <property type="entry name" value="RecF_2"/>
</dbReference>
<dbReference type="NCBIfam" id="TIGR00611">
    <property type="entry name" value="recf"/>
    <property type="match status" value="1"/>
</dbReference>
<dbReference type="PANTHER" id="PTHR32182">
    <property type="entry name" value="DNA REPLICATION AND REPAIR PROTEIN RECF"/>
    <property type="match status" value="1"/>
</dbReference>
<dbReference type="PANTHER" id="PTHR32182:SF0">
    <property type="entry name" value="DNA REPLICATION AND REPAIR PROTEIN RECF"/>
    <property type="match status" value="1"/>
</dbReference>
<dbReference type="Pfam" id="PF02463">
    <property type="entry name" value="SMC_N"/>
    <property type="match status" value="1"/>
</dbReference>
<dbReference type="SUPFAM" id="SSF52540">
    <property type="entry name" value="P-loop containing nucleoside triphosphate hydrolases"/>
    <property type="match status" value="1"/>
</dbReference>
<dbReference type="PROSITE" id="PS00617">
    <property type="entry name" value="RECF_1"/>
    <property type="match status" value="1"/>
</dbReference>
<dbReference type="PROSITE" id="PS00618">
    <property type="entry name" value="RECF_2"/>
    <property type="match status" value="1"/>
</dbReference>
<proteinExistence type="inferred from homology"/>
<name>RECF_YERPE</name>
<gene>
    <name evidence="1" type="primary">recF</name>
    <name type="ordered locus">YPO4095</name>
    <name type="ordered locus">y4111</name>
    <name type="ordered locus">YP_4003</name>
</gene>
<keyword id="KW-0067">ATP-binding</keyword>
<keyword id="KW-0963">Cytoplasm</keyword>
<keyword id="KW-0227">DNA damage</keyword>
<keyword id="KW-0234">DNA repair</keyword>
<keyword id="KW-0235">DNA replication</keyword>
<keyword id="KW-0238">DNA-binding</keyword>
<keyword id="KW-0547">Nucleotide-binding</keyword>
<keyword id="KW-1185">Reference proteome</keyword>
<keyword id="KW-0742">SOS response</keyword>
<evidence type="ECO:0000255" key="1">
    <source>
        <dbReference type="HAMAP-Rule" id="MF_00365"/>
    </source>
</evidence>
<evidence type="ECO:0000305" key="2"/>
<sequence length="361" mass="40468">MALTRLLIKDFRNIESADLALAAGFNFLVGPNGSGKTSVLEAVYTLGHGRAFRSLQAGRVIRHECAEFVLHGRVDANEREASVGLSKSRQGDTKVRIDGTDGHKVAELAQMLPMQLITPEGFTLLNGGPKFRRAFLDWGCFHNEPGFFTAWSNLKRLLKQRNAALRQVSRYTQIRAWDQEIIPLAERISEWRAAYSDAIAADISATCALFLPEFALSFSFQRGWDKESDYGELLARQFERDRALTYTAVGPHKADFRIRADGTPVEDLLSRGQLKLLMCALRLAQGEFLTRQSGRRCLYLLDDFASELDTGRRRLLAERLKATQAQVFVSAVSAEQVADMVGEKGKMFRVEHGKIEVQPQD</sequence>
<protein>
    <recommendedName>
        <fullName evidence="1">DNA replication and repair protein RecF</fullName>
    </recommendedName>
</protein>
<organism>
    <name type="scientific">Yersinia pestis</name>
    <dbReference type="NCBI Taxonomy" id="632"/>
    <lineage>
        <taxon>Bacteria</taxon>
        <taxon>Pseudomonadati</taxon>
        <taxon>Pseudomonadota</taxon>
        <taxon>Gammaproteobacteria</taxon>
        <taxon>Enterobacterales</taxon>
        <taxon>Yersiniaceae</taxon>
        <taxon>Yersinia</taxon>
    </lineage>
</organism>
<comment type="function">
    <text evidence="1">The RecF protein is involved in DNA metabolism; it is required for DNA replication and normal SOS inducibility. RecF binds preferentially to single-stranded, linear DNA. It also seems to bind ATP.</text>
</comment>
<comment type="subcellular location">
    <subcellularLocation>
        <location evidence="1">Cytoplasm</location>
    </subcellularLocation>
</comment>
<comment type="similarity">
    <text evidence="1">Belongs to the RecF family.</text>
</comment>
<comment type="sequence caution" evidence="2">
    <conflict type="erroneous initiation">
        <sequence resource="EMBL-CDS" id="AAM87653"/>
    </conflict>
</comment>
<comment type="sequence caution" evidence="2">
    <conflict type="erroneous initiation">
        <sequence resource="EMBL-CDS" id="AAS64142"/>
    </conflict>
</comment>
<feature type="chain" id="PRO_0000196493" description="DNA replication and repair protein RecF">
    <location>
        <begin position="1"/>
        <end position="361"/>
    </location>
</feature>
<feature type="binding site" evidence="1">
    <location>
        <begin position="30"/>
        <end position="37"/>
    </location>
    <ligand>
        <name>ATP</name>
        <dbReference type="ChEBI" id="CHEBI:30616"/>
    </ligand>
</feature>
<reference key="1">
    <citation type="journal article" date="2001" name="Nature">
        <title>Genome sequence of Yersinia pestis, the causative agent of plague.</title>
        <authorList>
            <person name="Parkhill J."/>
            <person name="Wren B.W."/>
            <person name="Thomson N.R."/>
            <person name="Titball R.W."/>
            <person name="Holden M.T.G."/>
            <person name="Prentice M.B."/>
            <person name="Sebaihia M."/>
            <person name="James K.D."/>
            <person name="Churcher C.M."/>
            <person name="Mungall K.L."/>
            <person name="Baker S."/>
            <person name="Basham D."/>
            <person name="Bentley S.D."/>
            <person name="Brooks K."/>
            <person name="Cerdeno-Tarraga A.-M."/>
            <person name="Chillingworth T."/>
            <person name="Cronin A."/>
            <person name="Davies R.M."/>
            <person name="Davis P."/>
            <person name="Dougan G."/>
            <person name="Feltwell T."/>
            <person name="Hamlin N."/>
            <person name="Holroyd S."/>
            <person name="Jagels K."/>
            <person name="Karlyshev A.V."/>
            <person name="Leather S."/>
            <person name="Moule S."/>
            <person name="Oyston P.C.F."/>
            <person name="Quail M.A."/>
            <person name="Rutherford K.M."/>
            <person name="Simmonds M."/>
            <person name="Skelton J."/>
            <person name="Stevens K."/>
            <person name="Whitehead S."/>
            <person name="Barrell B.G."/>
        </authorList>
    </citation>
    <scope>NUCLEOTIDE SEQUENCE [LARGE SCALE GENOMIC DNA]</scope>
    <source>
        <strain>CO-92 / Biovar Orientalis</strain>
    </source>
</reference>
<reference key="2">
    <citation type="journal article" date="2002" name="J. Bacteriol.">
        <title>Genome sequence of Yersinia pestis KIM.</title>
        <authorList>
            <person name="Deng W."/>
            <person name="Burland V."/>
            <person name="Plunkett G. III"/>
            <person name="Boutin A."/>
            <person name="Mayhew G.F."/>
            <person name="Liss P."/>
            <person name="Perna N.T."/>
            <person name="Rose D.J."/>
            <person name="Mau B."/>
            <person name="Zhou S."/>
            <person name="Schwartz D.C."/>
            <person name="Fetherston J.D."/>
            <person name="Lindler L.E."/>
            <person name="Brubaker R.R."/>
            <person name="Plano G.V."/>
            <person name="Straley S.C."/>
            <person name="McDonough K.A."/>
            <person name="Nilles M.L."/>
            <person name="Matson J.S."/>
            <person name="Blattner F.R."/>
            <person name="Perry R.D."/>
        </authorList>
    </citation>
    <scope>NUCLEOTIDE SEQUENCE [LARGE SCALE GENOMIC DNA]</scope>
    <source>
        <strain>KIM10+ / Biovar Mediaevalis</strain>
    </source>
</reference>
<reference key="3">
    <citation type="journal article" date="2004" name="DNA Res.">
        <title>Complete genome sequence of Yersinia pestis strain 91001, an isolate avirulent to humans.</title>
        <authorList>
            <person name="Song Y."/>
            <person name="Tong Z."/>
            <person name="Wang J."/>
            <person name="Wang L."/>
            <person name="Guo Z."/>
            <person name="Han Y."/>
            <person name="Zhang J."/>
            <person name="Pei D."/>
            <person name="Zhou D."/>
            <person name="Qin H."/>
            <person name="Pang X."/>
            <person name="Han Y."/>
            <person name="Zhai J."/>
            <person name="Li M."/>
            <person name="Cui B."/>
            <person name="Qi Z."/>
            <person name="Jin L."/>
            <person name="Dai R."/>
            <person name="Chen F."/>
            <person name="Li S."/>
            <person name="Ye C."/>
            <person name="Du Z."/>
            <person name="Lin W."/>
            <person name="Wang J."/>
            <person name="Yu J."/>
            <person name="Yang H."/>
            <person name="Wang J."/>
            <person name="Huang P."/>
            <person name="Yang R."/>
        </authorList>
    </citation>
    <scope>NUCLEOTIDE SEQUENCE [LARGE SCALE GENOMIC DNA]</scope>
    <source>
        <strain>91001 / Biovar Mediaevalis</strain>
    </source>
</reference>
<accession>Q8Z9U9</accession>
<accession>Q0W9U1</accession>